<organism>
    <name type="scientific">Schizosaccharomyces pombe (strain 972 / ATCC 24843)</name>
    <name type="common">Fission yeast</name>
    <dbReference type="NCBI Taxonomy" id="284812"/>
    <lineage>
        <taxon>Eukaryota</taxon>
        <taxon>Fungi</taxon>
        <taxon>Dikarya</taxon>
        <taxon>Ascomycota</taxon>
        <taxon>Taphrinomycotina</taxon>
        <taxon>Schizosaccharomycetes</taxon>
        <taxon>Schizosaccharomycetales</taxon>
        <taxon>Schizosaccharomycetaceae</taxon>
        <taxon>Schizosaccharomyces</taxon>
    </lineage>
</organism>
<sequence length="476" mass="52840">MKMSLDKLYEVIDKKKDEFVTRLSRAVSIPSVSADVTLRPKVVEMADFVVSEFTKLGAKMEKRDIGYHQMDGQDVPLPPIVLGQYGNDPSKKTVLIYNHFDVQPASLEDGWSTDPFTLTVDNKGRMFGRGATDDKGPLIGWISAIEAHKELGIDFPVNLLMCFEGMEEYGSEGLEDLIRAEAEKYFAKADCVCISDTYWLGTKKPVLTYGLRGVCYFNITVEGPSADLHSGVFGGTVHEPMTDLVAIMSTLVKPNGEILIPGIMDQVAELTPTEDSIYDGIDYTMEDLKEAVGADISIYPDPKRTLQHRWRYPTLSLHGIEGAFSGSGAKTVIPAKVIGKFSIRTVPNMESETVERLVKEHVTKVFNSLNSKNKLAFNNMHSGSWWISSPDHWHYDVGKKATERVYGITPDFVREGGSIPVTVTFEQSLKKNVLLLPMGRGDDGAHSINEKLDLDNFLKGIKLFCTYVHELASVSP</sequence>
<accession>Q9P6I2</accession>
<accession>P78801</accession>
<proteinExistence type="evidence at transcript level"/>
<name>DUG1_SCHPO</name>
<comment type="function">
    <text evidence="3">Catalytic component of the GSH degradosomal complex involved in the degradation of glutathione (GSH) and other peptides containing a gamma-glu-X bond. Has a Gly-Cys dipeptidase activity.</text>
</comment>
<comment type="cofactor">
    <cofactor evidence="1">
        <name>Zn(2+)</name>
        <dbReference type="ChEBI" id="CHEBI:29105"/>
    </cofactor>
    <cofactor evidence="1">
        <name>Mn(2+)</name>
        <dbReference type="ChEBI" id="CHEBI:29035"/>
    </cofactor>
</comment>
<comment type="subunit">
    <text evidence="1">Homodimer. Component of the GSH degradosomal complex.</text>
</comment>
<comment type="subcellular location">
    <subcellularLocation>
        <location evidence="2">Cytoplasm</location>
    </subcellularLocation>
</comment>
<comment type="similarity">
    <text evidence="4">Belongs to the peptidase M20A family.</text>
</comment>
<comment type="sequence caution" evidence="4">
    <conflict type="frameshift">
        <sequence resource="EMBL-CDS" id="BAA13812"/>
    </conflict>
</comment>
<dbReference type="EC" id="3.4.13.-"/>
<dbReference type="EMBL" id="CU329671">
    <property type="protein sequence ID" value="CAB91183.2"/>
    <property type="molecule type" value="Genomic_DNA"/>
</dbReference>
<dbReference type="EMBL" id="D89150">
    <property type="protein sequence ID" value="BAA13812.1"/>
    <property type="status" value="ALT_FRAME"/>
    <property type="molecule type" value="mRNA"/>
</dbReference>
<dbReference type="PIR" id="T42426">
    <property type="entry name" value="T42426"/>
</dbReference>
<dbReference type="RefSeq" id="NP_595077.2">
    <property type="nucleotide sequence ID" value="NM_001020983.2"/>
</dbReference>
<dbReference type="SMR" id="Q9P6I2"/>
<dbReference type="BioGRID" id="276203">
    <property type="interactions" value="17"/>
</dbReference>
<dbReference type="FunCoup" id="Q9P6I2">
    <property type="interactions" value="186"/>
</dbReference>
<dbReference type="STRING" id="284812.Q9P6I2"/>
<dbReference type="MEROPS" id="M20.017"/>
<dbReference type="iPTMnet" id="Q9P6I2"/>
<dbReference type="PaxDb" id="4896-SPBC1198.08.1"/>
<dbReference type="EnsemblFungi" id="SPBC1198.08.1">
    <property type="protein sequence ID" value="SPBC1198.08.1:pep"/>
    <property type="gene ID" value="SPBC1198.08"/>
</dbReference>
<dbReference type="GeneID" id="2539648"/>
<dbReference type="KEGG" id="spo:2539648"/>
<dbReference type="PomBase" id="SPBC1198.08">
    <property type="gene designation" value="dug1"/>
</dbReference>
<dbReference type="VEuPathDB" id="FungiDB:SPBC1198.08"/>
<dbReference type="eggNOG" id="KOG2276">
    <property type="taxonomic scope" value="Eukaryota"/>
</dbReference>
<dbReference type="HOGENOM" id="CLU_029469_3_0_1"/>
<dbReference type="InParanoid" id="Q9P6I2"/>
<dbReference type="OMA" id="CNVKFMI"/>
<dbReference type="Reactome" id="R-SPO-174403">
    <property type="pathway name" value="Glutathione synthesis and recycling"/>
</dbReference>
<dbReference type="Reactome" id="R-SPO-9753281">
    <property type="pathway name" value="Paracetamol ADME"/>
</dbReference>
<dbReference type="PRO" id="PR:Q9P6I2"/>
<dbReference type="Proteomes" id="UP000002485">
    <property type="component" value="Chromosome II"/>
</dbReference>
<dbReference type="GO" id="GO:0005829">
    <property type="term" value="C:cytosol"/>
    <property type="evidence" value="ECO:0007005"/>
    <property type="project" value="PomBase"/>
</dbReference>
<dbReference type="GO" id="GO:0005634">
    <property type="term" value="C:nucleus"/>
    <property type="evidence" value="ECO:0007005"/>
    <property type="project" value="PomBase"/>
</dbReference>
<dbReference type="GO" id="GO:0046872">
    <property type="term" value="F:metal ion binding"/>
    <property type="evidence" value="ECO:0007669"/>
    <property type="project" value="UniProtKB-KW"/>
</dbReference>
<dbReference type="GO" id="GO:0070573">
    <property type="term" value="F:metallodipeptidase activity"/>
    <property type="evidence" value="ECO:0000266"/>
    <property type="project" value="PomBase"/>
</dbReference>
<dbReference type="GO" id="GO:0008233">
    <property type="term" value="F:peptidase activity"/>
    <property type="evidence" value="ECO:0000318"/>
    <property type="project" value="GO_Central"/>
</dbReference>
<dbReference type="GO" id="GO:0006751">
    <property type="term" value="P:glutathione catabolic process"/>
    <property type="evidence" value="ECO:0000266"/>
    <property type="project" value="PomBase"/>
</dbReference>
<dbReference type="GO" id="GO:0006508">
    <property type="term" value="P:proteolysis"/>
    <property type="evidence" value="ECO:0000318"/>
    <property type="project" value="GO_Central"/>
</dbReference>
<dbReference type="CDD" id="cd05676">
    <property type="entry name" value="M20_dipept_like_CNDP"/>
    <property type="match status" value="1"/>
</dbReference>
<dbReference type="Gene3D" id="3.30.70.360">
    <property type="match status" value="1"/>
</dbReference>
<dbReference type="Gene3D" id="3.40.630.10">
    <property type="entry name" value="Zn peptidases"/>
    <property type="match status" value="1"/>
</dbReference>
<dbReference type="InterPro" id="IPR001261">
    <property type="entry name" value="ArgE/DapE_CS"/>
</dbReference>
<dbReference type="InterPro" id="IPR017153">
    <property type="entry name" value="CNDP/DUG1"/>
</dbReference>
<dbReference type="InterPro" id="IPR051458">
    <property type="entry name" value="Cyt/Met_Dipeptidase"/>
</dbReference>
<dbReference type="InterPro" id="IPR002933">
    <property type="entry name" value="Peptidase_M20"/>
</dbReference>
<dbReference type="InterPro" id="IPR011650">
    <property type="entry name" value="Peptidase_M20_dimer"/>
</dbReference>
<dbReference type="PANTHER" id="PTHR43270">
    <property type="entry name" value="BETA-ALA-HIS DIPEPTIDASE"/>
    <property type="match status" value="1"/>
</dbReference>
<dbReference type="PANTHER" id="PTHR43270:SF4">
    <property type="entry name" value="CARNOSINE DIPEPTIDASE 2, ISOFORM A"/>
    <property type="match status" value="1"/>
</dbReference>
<dbReference type="Pfam" id="PF07687">
    <property type="entry name" value="M20_dimer"/>
    <property type="match status" value="1"/>
</dbReference>
<dbReference type="Pfam" id="PF01546">
    <property type="entry name" value="Peptidase_M20"/>
    <property type="match status" value="1"/>
</dbReference>
<dbReference type="PIRSF" id="PIRSF037242">
    <property type="entry name" value="CNDP_dipeptidase"/>
    <property type="match status" value="1"/>
</dbReference>
<dbReference type="SUPFAM" id="SSF53187">
    <property type="entry name" value="Zn-dependent exopeptidases"/>
    <property type="match status" value="1"/>
</dbReference>
<dbReference type="PROSITE" id="PS00759">
    <property type="entry name" value="ARGE_DAPE_CPG2_2"/>
    <property type="match status" value="1"/>
</dbReference>
<protein>
    <recommendedName>
        <fullName>Cys-Gly metallodipeptidase dug1</fullName>
        <ecNumber>3.4.13.-</ecNumber>
    </recommendedName>
    <alternativeName>
        <fullName>GSH degradosomal complex subunit DUG1</fullName>
    </alternativeName>
</protein>
<reference key="1">
    <citation type="journal article" date="2002" name="Nature">
        <title>The genome sequence of Schizosaccharomyces pombe.</title>
        <authorList>
            <person name="Wood V."/>
            <person name="Gwilliam R."/>
            <person name="Rajandream M.A."/>
            <person name="Lyne M.H."/>
            <person name="Lyne R."/>
            <person name="Stewart A."/>
            <person name="Sgouros J.G."/>
            <person name="Peat N."/>
            <person name="Hayles J."/>
            <person name="Baker S.G."/>
            <person name="Basham D."/>
            <person name="Bowman S."/>
            <person name="Brooks K."/>
            <person name="Brown D."/>
            <person name="Brown S."/>
            <person name="Chillingworth T."/>
            <person name="Churcher C.M."/>
            <person name="Collins M."/>
            <person name="Connor R."/>
            <person name="Cronin A."/>
            <person name="Davis P."/>
            <person name="Feltwell T."/>
            <person name="Fraser A."/>
            <person name="Gentles S."/>
            <person name="Goble A."/>
            <person name="Hamlin N."/>
            <person name="Harris D.E."/>
            <person name="Hidalgo J."/>
            <person name="Hodgson G."/>
            <person name="Holroyd S."/>
            <person name="Hornsby T."/>
            <person name="Howarth S."/>
            <person name="Huckle E.J."/>
            <person name="Hunt S."/>
            <person name="Jagels K."/>
            <person name="James K.D."/>
            <person name="Jones L."/>
            <person name="Jones M."/>
            <person name="Leather S."/>
            <person name="McDonald S."/>
            <person name="McLean J."/>
            <person name="Mooney P."/>
            <person name="Moule S."/>
            <person name="Mungall K.L."/>
            <person name="Murphy L.D."/>
            <person name="Niblett D."/>
            <person name="Odell C."/>
            <person name="Oliver K."/>
            <person name="O'Neil S."/>
            <person name="Pearson D."/>
            <person name="Quail M.A."/>
            <person name="Rabbinowitsch E."/>
            <person name="Rutherford K.M."/>
            <person name="Rutter S."/>
            <person name="Saunders D."/>
            <person name="Seeger K."/>
            <person name="Sharp S."/>
            <person name="Skelton J."/>
            <person name="Simmonds M.N."/>
            <person name="Squares R."/>
            <person name="Squares S."/>
            <person name="Stevens K."/>
            <person name="Taylor K."/>
            <person name="Taylor R.G."/>
            <person name="Tivey A."/>
            <person name="Walsh S.V."/>
            <person name="Warren T."/>
            <person name="Whitehead S."/>
            <person name="Woodward J.R."/>
            <person name="Volckaert G."/>
            <person name="Aert R."/>
            <person name="Robben J."/>
            <person name="Grymonprez B."/>
            <person name="Weltjens I."/>
            <person name="Vanstreels E."/>
            <person name="Rieger M."/>
            <person name="Schaefer M."/>
            <person name="Mueller-Auer S."/>
            <person name="Gabel C."/>
            <person name="Fuchs M."/>
            <person name="Duesterhoeft A."/>
            <person name="Fritzc C."/>
            <person name="Holzer E."/>
            <person name="Moestl D."/>
            <person name="Hilbert H."/>
            <person name="Borzym K."/>
            <person name="Langer I."/>
            <person name="Beck A."/>
            <person name="Lehrach H."/>
            <person name="Reinhardt R."/>
            <person name="Pohl T.M."/>
            <person name="Eger P."/>
            <person name="Zimmermann W."/>
            <person name="Wedler H."/>
            <person name="Wambutt R."/>
            <person name="Purnelle B."/>
            <person name="Goffeau A."/>
            <person name="Cadieu E."/>
            <person name="Dreano S."/>
            <person name="Gloux S."/>
            <person name="Lelaure V."/>
            <person name="Mottier S."/>
            <person name="Galibert F."/>
            <person name="Aves S.J."/>
            <person name="Xiang Z."/>
            <person name="Hunt C."/>
            <person name="Moore K."/>
            <person name="Hurst S.M."/>
            <person name="Lucas M."/>
            <person name="Rochet M."/>
            <person name="Gaillardin C."/>
            <person name="Tallada V.A."/>
            <person name="Garzon A."/>
            <person name="Thode G."/>
            <person name="Daga R.R."/>
            <person name="Cruzado L."/>
            <person name="Jimenez J."/>
            <person name="Sanchez M."/>
            <person name="del Rey F."/>
            <person name="Benito J."/>
            <person name="Dominguez A."/>
            <person name="Revuelta J.L."/>
            <person name="Moreno S."/>
            <person name="Armstrong J."/>
            <person name="Forsburg S.L."/>
            <person name="Cerutti L."/>
            <person name="Lowe T."/>
            <person name="McCombie W.R."/>
            <person name="Paulsen I."/>
            <person name="Potashkin J."/>
            <person name="Shpakovski G.V."/>
            <person name="Ussery D."/>
            <person name="Barrell B.G."/>
            <person name="Nurse P."/>
        </authorList>
    </citation>
    <scope>NUCLEOTIDE SEQUENCE [LARGE SCALE GENOMIC DNA]</scope>
    <source>
        <strain>972 / ATCC 24843</strain>
    </source>
</reference>
<reference key="2">
    <citation type="journal article" date="2011" name="Science">
        <title>Comparative functional genomics of the fission yeasts.</title>
        <authorList>
            <person name="Rhind N."/>
            <person name="Chen Z."/>
            <person name="Yassour M."/>
            <person name="Thompson D.A."/>
            <person name="Haas B.J."/>
            <person name="Habib N."/>
            <person name="Wapinski I."/>
            <person name="Roy S."/>
            <person name="Lin M.F."/>
            <person name="Heiman D.I."/>
            <person name="Young S.K."/>
            <person name="Furuya K."/>
            <person name="Guo Y."/>
            <person name="Pidoux A."/>
            <person name="Chen H.M."/>
            <person name="Robbertse B."/>
            <person name="Goldberg J.M."/>
            <person name="Aoki K."/>
            <person name="Bayne E.H."/>
            <person name="Berlin A.M."/>
            <person name="Desjardins C.A."/>
            <person name="Dobbs E."/>
            <person name="Dukaj L."/>
            <person name="Fan L."/>
            <person name="FitzGerald M.G."/>
            <person name="French C."/>
            <person name="Gujja S."/>
            <person name="Hansen K."/>
            <person name="Keifenheim D."/>
            <person name="Levin J.Z."/>
            <person name="Mosher R.A."/>
            <person name="Mueller C.A."/>
            <person name="Pfiffner J."/>
            <person name="Priest M."/>
            <person name="Russ C."/>
            <person name="Smialowska A."/>
            <person name="Swoboda P."/>
            <person name="Sykes S.M."/>
            <person name="Vaughn M."/>
            <person name="Vengrova S."/>
            <person name="Yoder R."/>
            <person name="Zeng Q."/>
            <person name="Allshire R."/>
            <person name="Baulcombe D."/>
            <person name="Birren B.W."/>
            <person name="Brown W."/>
            <person name="Ekwall K."/>
            <person name="Kellis M."/>
            <person name="Leatherwood J."/>
            <person name="Levin H."/>
            <person name="Margalit H."/>
            <person name="Martienssen R."/>
            <person name="Nieduszynski C.A."/>
            <person name="Spatafora J.W."/>
            <person name="Friedman N."/>
            <person name="Dalgaard J.Z."/>
            <person name="Baumann P."/>
            <person name="Niki H."/>
            <person name="Regev A."/>
            <person name="Nusbaum C."/>
        </authorList>
    </citation>
    <scope>REVISION OF GENE MODEL</scope>
</reference>
<reference key="3">
    <citation type="journal article" date="1997" name="DNA Res.">
        <title>Identification of open reading frames in Schizosaccharomyces pombe cDNAs.</title>
        <authorList>
            <person name="Yoshioka S."/>
            <person name="Kato K."/>
            <person name="Nakai K."/>
            <person name="Okayama H."/>
            <person name="Nojima H."/>
        </authorList>
    </citation>
    <scope>NUCLEOTIDE SEQUENCE [LARGE SCALE MRNA] OF 70-455</scope>
    <source>
        <strain>PR745</strain>
    </source>
</reference>
<reference key="4">
    <citation type="journal article" date="2006" name="Nat. Biotechnol.">
        <title>ORFeome cloning and global analysis of protein localization in the fission yeast Schizosaccharomyces pombe.</title>
        <authorList>
            <person name="Matsuyama A."/>
            <person name="Arai R."/>
            <person name="Yashiroda Y."/>
            <person name="Shirai A."/>
            <person name="Kamata A."/>
            <person name="Sekido S."/>
            <person name="Kobayashi Y."/>
            <person name="Hashimoto A."/>
            <person name="Hamamoto M."/>
            <person name="Hiraoka Y."/>
            <person name="Horinouchi S."/>
            <person name="Yoshida M."/>
        </authorList>
    </citation>
    <scope>SUBCELLULAR LOCATION [LARGE SCALE ANALYSIS]</scope>
</reference>
<reference key="5">
    <citation type="journal article" date="2009" name="J. Biol. Chem.">
        <title>Dug1p Is a Cys-Gly peptidase of the gamma-glutamyl cycle of Saccharomyces cerevisiae and represents a novel family of Cys-Gly peptidases.</title>
        <authorList>
            <person name="Kaur H."/>
            <person name="Kumar C."/>
            <person name="Junot C."/>
            <person name="Toledano M.B."/>
            <person name="Bachhawat A.K."/>
        </authorList>
    </citation>
    <scope>FUNCTION</scope>
</reference>
<evidence type="ECO:0000250" key="1"/>
<evidence type="ECO:0000269" key="2">
    <source>
    </source>
</evidence>
<evidence type="ECO:0000269" key="3">
    <source>
    </source>
</evidence>
<evidence type="ECO:0000305" key="4"/>
<feature type="chain" id="PRO_0000185274" description="Cys-Gly metallodipeptidase dug1">
    <location>
        <begin position="1"/>
        <end position="476"/>
    </location>
</feature>
<feature type="active site" evidence="1">
    <location>
        <position position="101"/>
    </location>
</feature>
<feature type="active site" description="Proton acceptor" evidence="1">
    <location>
        <position position="167"/>
    </location>
</feature>
<feature type="binding site" evidence="1">
    <location>
        <position position="99"/>
    </location>
    <ligand>
        <name>Zn(2+)</name>
        <dbReference type="ChEBI" id="CHEBI:29105"/>
        <label>2</label>
    </ligand>
</feature>
<feature type="binding site" evidence="1">
    <location>
        <position position="133"/>
    </location>
    <ligand>
        <name>Zn(2+)</name>
        <dbReference type="ChEBI" id="CHEBI:29105"/>
        <label>1</label>
    </ligand>
</feature>
<feature type="binding site" evidence="1">
    <location>
        <position position="133"/>
    </location>
    <ligand>
        <name>Zn(2+)</name>
        <dbReference type="ChEBI" id="CHEBI:29105"/>
        <label>2</label>
    </ligand>
</feature>
<feature type="binding site" evidence="1">
    <location>
        <position position="168"/>
    </location>
    <ligand>
        <name>Zn(2+)</name>
        <dbReference type="ChEBI" id="CHEBI:29105"/>
        <label>1</label>
    </ligand>
</feature>
<feature type="binding site" evidence="1">
    <location>
        <position position="196"/>
    </location>
    <ligand>
        <name>Zn(2+)</name>
        <dbReference type="ChEBI" id="CHEBI:29105"/>
        <label>2</label>
    </ligand>
</feature>
<feature type="binding site" evidence="1">
    <location>
        <position position="446"/>
    </location>
    <ligand>
        <name>Zn(2+)</name>
        <dbReference type="ChEBI" id="CHEBI:29105"/>
        <label>1</label>
    </ligand>
</feature>
<feature type="sequence conflict" description="In Ref. 3; BAA13812." evidence="4" ref="3">
    <original>G</original>
    <variation>D</variation>
    <location>
        <position position="439"/>
    </location>
</feature>
<gene>
    <name type="primary">dug1</name>
    <name type="ORF">SPBC1198.08</name>
</gene>
<keyword id="KW-0963">Cytoplasm</keyword>
<keyword id="KW-0224">Dipeptidase</keyword>
<keyword id="KW-0378">Hydrolase</keyword>
<keyword id="KW-0464">Manganese</keyword>
<keyword id="KW-0479">Metal-binding</keyword>
<keyword id="KW-0482">Metalloprotease</keyword>
<keyword id="KW-0645">Protease</keyword>
<keyword id="KW-1185">Reference proteome</keyword>
<keyword id="KW-0862">Zinc</keyword>